<reference key="1">
    <citation type="journal article" date="2004" name="Nature">
        <title>The sequence and analysis of duplication-rich human chromosome 16.</title>
        <authorList>
            <person name="Martin J."/>
            <person name="Han C."/>
            <person name="Gordon L.A."/>
            <person name="Terry A."/>
            <person name="Prabhakar S."/>
            <person name="She X."/>
            <person name="Xie G."/>
            <person name="Hellsten U."/>
            <person name="Chan Y.M."/>
            <person name="Altherr M."/>
            <person name="Couronne O."/>
            <person name="Aerts A."/>
            <person name="Bajorek E."/>
            <person name="Black S."/>
            <person name="Blumer H."/>
            <person name="Branscomb E."/>
            <person name="Brown N.C."/>
            <person name="Bruno W.J."/>
            <person name="Buckingham J.M."/>
            <person name="Callen D.F."/>
            <person name="Campbell C.S."/>
            <person name="Campbell M.L."/>
            <person name="Campbell E.W."/>
            <person name="Caoile C."/>
            <person name="Challacombe J.F."/>
            <person name="Chasteen L.A."/>
            <person name="Chertkov O."/>
            <person name="Chi H.C."/>
            <person name="Christensen M."/>
            <person name="Clark L.M."/>
            <person name="Cohn J.D."/>
            <person name="Denys M."/>
            <person name="Detter J.C."/>
            <person name="Dickson M."/>
            <person name="Dimitrijevic-Bussod M."/>
            <person name="Escobar J."/>
            <person name="Fawcett J.J."/>
            <person name="Flowers D."/>
            <person name="Fotopulos D."/>
            <person name="Glavina T."/>
            <person name="Gomez M."/>
            <person name="Gonzales E."/>
            <person name="Goodstein D."/>
            <person name="Goodwin L.A."/>
            <person name="Grady D.L."/>
            <person name="Grigoriev I."/>
            <person name="Groza M."/>
            <person name="Hammon N."/>
            <person name="Hawkins T."/>
            <person name="Haydu L."/>
            <person name="Hildebrand C.E."/>
            <person name="Huang W."/>
            <person name="Israni S."/>
            <person name="Jett J."/>
            <person name="Jewett P.B."/>
            <person name="Kadner K."/>
            <person name="Kimball H."/>
            <person name="Kobayashi A."/>
            <person name="Krawczyk M.-C."/>
            <person name="Leyba T."/>
            <person name="Longmire J.L."/>
            <person name="Lopez F."/>
            <person name="Lou Y."/>
            <person name="Lowry S."/>
            <person name="Ludeman T."/>
            <person name="Manohar C.F."/>
            <person name="Mark G.A."/>
            <person name="McMurray K.L."/>
            <person name="Meincke L.J."/>
            <person name="Morgan J."/>
            <person name="Moyzis R.K."/>
            <person name="Mundt M.O."/>
            <person name="Munk A.C."/>
            <person name="Nandkeshwar R.D."/>
            <person name="Pitluck S."/>
            <person name="Pollard M."/>
            <person name="Predki P."/>
            <person name="Parson-Quintana B."/>
            <person name="Ramirez L."/>
            <person name="Rash S."/>
            <person name="Retterer J."/>
            <person name="Ricke D.O."/>
            <person name="Robinson D.L."/>
            <person name="Rodriguez A."/>
            <person name="Salamov A."/>
            <person name="Saunders E.H."/>
            <person name="Scott D."/>
            <person name="Shough T."/>
            <person name="Stallings R.L."/>
            <person name="Stalvey M."/>
            <person name="Sutherland R.D."/>
            <person name="Tapia R."/>
            <person name="Tesmer J.G."/>
            <person name="Thayer N."/>
            <person name="Thompson L.S."/>
            <person name="Tice H."/>
            <person name="Torney D.C."/>
            <person name="Tran-Gyamfi M."/>
            <person name="Tsai M."/>
            <person name="Ulanovsky L.E."/>
            <person name="Ustaszewska A."/>
            <person name="Vo N."/>
            <person name="White P.S."/>
            <person name="Williams A.L."/>
            <person name="Wills P.L."/>
            <person name="Wu J.-R."/>
            <person name="Wu K."/>
            <person name="Yang J."/>
            <person name="DeJong P."/>
            <person name="Bruce D."/>
            <person name="Doggett N.A."/>
            <person name="Deaven L."/>
            <person name="Schmutz J."/>
            <person name="Grimwood J."/>
            <person name="Richardson P."/>
            <person name="Rokhsar D.S."/>
            <person name="Eichler E.E."/>
            <person name="Gilna P."/>
            <person name="Lucas S.M."/>
            <person name="Myers R.M."/>
            <person name="Rubin E.M."/>
            <person name="Pennacchio L.A."/>
        </authorList>
    </citation>
    <scope>NUCLEOTIDE SEQUENCE [LARGE SCALE GENOMIC DNA]</scope>
</reference>
<reference key="2">
    <citation type="journal article" date="2004" name="Genome Res.">
        <title>The status, quality, and expansion of the NIH full-length cDNA project: the Mammalian Gene Collection (MGC).</title>
        <authorList>
            <consortium name="The MGC Project Team"/>
        </authorList>
    </citation>
    <scope>NUCLEOTIDE SEQUENCE [LARGE SCALE MRNA] (ISOFORMS 1 AND 2)</scope>
    <scope>NUCLEOTIDE SEQUENCE [LARGE SCALE MRNA] OF 42-515 (ISOFORM 3)</scope>
    <scope>VARIANTS VAL-253 AND ARG-416</scope>
    <source>
        <tissue>Brain</tissue>
        <tissue>Choriocarcinoma</tissue>
        <tissue>Skin</tissue>
    </source>
</reference>
<reference key="3">
    <citation type="journal article" date="2006" name="Cell">
        <title>Global, in vivo, and site-specific phosphorylation dynamics in signaling networks.</title>
        <authorList>
            <person name="Olsen J.V."/>
            <person name="Blagoev B."/>
            <person name="Gnad F."/>
            <person name="Macek B."/>
            <person name="Kumar C."/>
            <person name="Mortensen P."/>
            <person name="Mann M."/>
        </authorList>
    </citation>
    <scope>PHOSPHORYLATION [LARGE SCALE ANALYSIS] AT SER-508</scope>
    <scope>IDENTIFICATION BY MASS SPECTROMETRY [LARGE SCALE ANALYSIS]</scope>
    <source>
        <tissue>Cervix carcinoma</tissue>
    </source>
</reference>
<reference key="4">
    <citation type="journal article" date="2008" name="Proc. Natl. Acad. Sci. U.S.A.">
        <title>A quantitative atlas of mitotic phosphorylation.</title>
        <authorList>
            <person name="Dephoure N."/>
            <person name="Zhou C."/>
            <person name="Villen J."/>
            <person name="Beausoleil S.A."/>
            <person name="Bakalarski C.E."/>
            <person name="Elledge S.J."/>
            <person name="Gygi S.P."/>
        </authorList>
    </citation>
    <scope>PHOSPHORYLATION [LARGE SCALE ANALYSIS] AT SER-419 AND SER-508</scope>
    <scope>IDENTIFICATION BY MASS SPECTROMETRY [LARGE SCALE ANALYSIS]</scope>
    <source>
        <tissue>Cervix carcinoma</tissue>
    </source>
</reference>
<reference key="5">
    <citation type="journal article" date="2008" name="Proc. Natl. Acad. Sci. U.S.A.">
        <title>A functional proteomics approach links the ubiquitin-related modifier Urm1 to a tRNA modification pathway.</title>
        <authorList>
            <person name="Schlieker C.D."/>
            <person name="Van der Veen A.G."/>
            <person name="Damon J.R."/>
            <person name="Spooner E."/>
            <person name="Ploegh H.L."/>
        </authorList>
    </citation>
    <scope>FUNCTION IN 2-THIOLATION OF TRNA</scope>
    <scope>IDENTIFICATION IN A COMPLEX WITH URM1 AND CTU1</scope>
</reference>
<reference key="6">
    <citation type="journal article" date="2009" name="Anal. Chem.">
        <title>Lys-N and trypsin cover complementary parts of the phosphoproteome in a refined SCX-based approach.</title>
        <authorList>
            <person name="Gauci S."/>
            <person name="Helbig A.O."/>
            <person name="Slijper M."/>
            <person name="Krijgsveld J."/>
            <person name="Heck A.J."/>
            <person name="Mohammed S."/>
        </authorList>
    </citation>
    <scope>ACETYLATION [LARGE SCALE ANALYSIS] AT CYS-2</scope>
    <scope>CLEAVAGE OF INITIATOR METHIONINE [LARGE SCALE ANALYSIS]</scope>
    <scope>IDENTIFICATION BY MASS SPECTROMETRY [LARGE SCALE ANALYSIS]</scope>
</reference>
<reference key="7">
    <citation type="journal article" date="2009" name="Sci. Signal.">
        <title>Quantitative phosphoproteomic analysis of T cell receptor signaling reveals system-wide modulation of protein-protein interactions.</title>
        <authorList>
            <person name="Mayya V."/>
            <person name="Lundgren D.H."/>
            <person name="Hwang S.-I."/>
            <person name="Rezaul K."/>
            <person name="Wu L."/>
            <person name="Eng J.K."/>
            <person name="Rodionov V."/>
            <person name="Han D.K."/>
        </authorList>
    </citation>
    <scope>PHOSPHORYLATION [LARGE SCALE ANALYSIS] AT SER-419</scope>
    <scope>IDENTIFICATION BY MASS SPECTROMETRY [LARGE SCALE ANALYSIS]</scope>
    <source>
        <tissue>Leukemic T-cell</tissue>
    </source>
</reference>
<reference key="8">
    <citation type="journal article" date="2010" name="Sci. Signal.">
        <title>Quantitative phosphoproteomics reveals widespread full phosphorylation site occupancy during mitosis.</title>
        <authorList>
            <person name="Olsen J.V."/>
            <person name="Vermeulen M."/>
            <person name="Santamaria A."/>
            <person name="Kumar C."/>
            <person name="Miller M.L."/>
            <person name="Jensen L.J."/>
            <person name="Gnad F."/>
            <person name="Cox J."/>
            <person name="Jensen T.S."/>
            <person name="Nigg E.A."/>
            <person name="Brunak S."/>
            <person name="Mann M."/>
        </authorList>
    </citation>
    <scope>PHOSPHORYLATION [LARGE SCALE ANALYSIS] AT SER-415</scope>
    <scope>IDENTIFICATION BY MASS SPECTROMETRY [LARGE SCALE ANALYSIS]</scope>
    <source>
        <tissue>Cervix carcinoma</tissue>
    </source>
</reference>
<reference key="9">
    <citation type="journal article" date="2011" name="BMC Syst. Biol.">
        <title>Initial characterization of the human central proteome.</title>
        <authorList>
            <person name="Burkard T.R."/>
            <person name="Planyavsky M."/>
            <person name="Kaupe I."/>
            <person name="Breitwieser F.P."/>
            <person name="Buerckstuemmer T."/>
            <person name="Bennett K.L."/>
            <person name="Superti-Furga G."/>
            <person name="Colinge J."/>
        </authorList>
    </citation>
    <scope>IDENTIFICATION BY MASS SPECTROMETRY [LARGE SCALE ANALYSIS]</scope>
</reference>
<reference key="10">
    <citation type="journal article" date="2013" name="J. Proteome Res.">
        <title>Toward a comprehensive characterization of a human cancer cell phosphoproteome.</title>
        <authorList>
            <person name="Zhou H."/>
            <person name="Di Palma S."/>
            <person name="Preisinger C."/>
            <person name="Peng M."/>
            <person name="Polat A.N."/>
            <person name="Heck A.J."/>
            <person name="Mohammed S."/>
        </authorList>
    </citation>
    <scope>PHOSPHORYLATION [LARGE SCALE ANALYSIS] AT SER-419 AND SER-435</scope>
    <scope>IDENTIFICATION BY MASS SPECTROMETRY [LARGE SCALE ANALYSIS]</scope>
    <source>
        <tissue>Cervix carcinoma</tissue>
        <tissue>Erythroleukemia</tissue>
    </source>
</reference>
<reference key="11">
    <citation type="journal article" date="2016" name="Genet. Med.">
        <title>Accelerating matchmaking of novel dysmorphology syndromes through clinical and genomic characterization of a large cohort.</title>
        <authorList>
            <person name="Shaheen R."/>
            <person name="Patel N."/>
            <person name="Shamseldin H."/>
            <person name="Alzahrani F."/>
            <person name="Al-Yamany R."/>
            <person name="Almoisheer A."/>
            <person name="Ewida N."/>
            <person name="Anazi S."/>
            <person name="Alnemer M."/>
            <person name="Elsheikh M."/>
            <person name="Alfaleh K."/>
            <person name="Alshammari M."/>
            <person name="Alhashem A."/>
            <person name="Alangari A.A."/>
            <person name="Salih M.A."/>
            <person name="Kircher M."/>
            <person name="Daza R.M."/>
            <person name="Ibrahim N."/>
            <person name="Wakil S.M."/>
            <person name="Alaqeel A."/>
            <person name="Altowaijri I."/>
            <person name="Shendure J."/>
            <person name="Al-Habib A."/>
            <person name="Faqieh E."/>
            <person name="Alkuraya F.S."/>
        </authorList>
    </citation>
    <scope>INVOLVEMENT IN MFRG</scope>
</reference>
<keyword id="KW-0007">Acetylation</keyword>
<keyword id="KW-0025">Alternative splicing</keyword>
<keyword id="KW-0963">Cytoplasm</keyword>
<keyword id="KW-0597">Phosphoprotein</keyword>
<keyword id="KW-0905">Primary microcephaly</keyword>
<keyword id="KW-1267">Proteomics identification</keyword>
<keyword id="KW-1185">Reference proteome</keyword>
<keyword id="KW-0819">tRNA processing</keyword>
<proteinExistence type="evidence at protein level"/>
<accession>Q2VPK5</accession>
<accession>B2RXK0</accession>
<accession>Q0P511</accession>
<accession>Q66K78</accession>
<accession>Q6P4C8</accession>
<accession>Q86SV4</accession>
<sequence>MCQVGEDYGEPAPEEPPPAPRPSREQKCVKCKEAQPVVVIRAGDAFCRDCFKAFYVHKFRAMLGKNRLIFPGEKVLLAWSGGPSSSSMVWQVLEGLSQDSAKRLRFVAGVIFVDEGAACGQSLEERSKTLAEVKPILQATGFPWHVVALEEVFSLPPSVLWCSAQELVGSEGAYKAAVDSFLQQQHVLGAGGGPGPTQGEEQPPQPPLDPQNLARPPAPAQTEALSQLFCSVRTLTAKEELLQTLRTHLILHMARAHGYSKVMTGDSCTRLAIKLMTNLALGRGAFLAWDTGFSDERHGDVVVVRPMRDHTLKEVAFYNRLFSVPSVFTPAVDTKAPEKASIHRLMEAFILRLQTQFPSTVSTVYRTSEKLVKGPRDGPAAGDSGPRCLLCMCALDVDAADSATAFGAQTSSRLSQMQSPIPLTETRTPPGPCCSPGVGWAQRCGQGACRREDPQACIEEQLCYSCRVNMKDLPSLDPLPPYILAEAQLRTQRAWGLQEIRDCLIEDSDDEAGQS</sequence>
<protein>
    <recommendedName>
        <fullName evidence="1">Cytoplasmic tRNA 2-thiolation protein 2</fullName>
    </recommendedName>
    <alternativeName>
        <fullName>Cytosolic thiouridylase subunit 2</fullName>
    </alternativeName>
</protein>
<organism>
    <name type="scientific">Homo sapiens</name>
    <name type="common">Human</name>
    <dbReference type="NCBI Taxonomy" id="9606"/>
    <lineage>
        <taxon>Eukaryota</taxon>
        <taxon>Metazoa</taxon>
        <taxon>Chordata</taxon>
        <taxon>Craniata</taxon>
        <taxon>Vertebrata</taxon>
        <taxon>Euteleostomi</taxon>
        <taxon>Mammalia</taxon>
        <taxon>Eutheria</taxon>
        <taxon>Euarchontoglires</taxon>
        <taxon>Primates</taxon>
        <taxon>Haplorrhini</taxon>
        <taxon>Catarrhini</taxon>
        <taxon>Hominidae</taxon>
        <taxon>Homo</taxon>
    </lineage>
</organism>
<dbReference type="EMBL" id="AC138028">
    <property type="status" value="NOT_ANNOTATED_CDS"/>
    <property type="molecule type" value="Genomic_DNA"/>
</dbReference>
<dbReference type="EMBL" id="BC021829">
    <property type="status" value="NOT_ANNOTATED_CDS"/>
    <property type="molecule type" value="mRNA"/>
</dbReference>
<dbReference type="EMBL" id="BC080540">
    <property type="protein sequence ID" value="AAH80540.1"/>
    <property type="molecule type" value="mRNA"/>
</dbReference>
<dbReference type="EMBL" id="BC108659">
    <property type="protein sequence ID" value="AAI08660.1"/>
    <property type="molecule type" value="mRNA"/>
</dbReference>
<dbReference type="EMBL" id="BC121805">
    <property type="protein sequence ID" value="AAI21806.1"/>
    <property type="molecule type" value="mRNA"/>
</dbReference>
<dbReference type="EMBL" id="BC125269">
    <property type="protein sequence ID" value="AAI25270.1"/>
    <property type="molecule type" value="mRNA"/>
</dbReference>
<dbReference type="EMBL" id="BC157881">
    <property type="protein sequence ID" value="AAI57882.1"/>
    <property type="molecule type" value="mRNA"/>
</dbReference>
<dbReference type="CCDS" id="CCDS32506.1">
    <molecule id="Q2VPK5-5"/>
</dbReference>
<dbReference type="CCDS" id="CCDS45545.1">
    <molecule id="Q2VPK5-1"/>
</dbReference>
<dbReference type="RefSeq" id="NP_001012777.1">
    <molecule id="Q2VPK5-1"/>
    <property type="nucleotide sequence ID" value="NM_001012759.3"/>
</dbReference>
<dbReference type="RefSeq" id="NP_001012780.1">
    <molecule id="Q2VPK5-5"/>
    <property type="nucleotide sequence ID" value="NM_001012762.3"/>
</dbReference>
<dbReference type="RefSeq" id="NP_001305436.1">
    <property type="nucleotide sequence ID" value="NM_001318507.1"/>
</dbReference>
<dbReference type="RefSeq" id="NP_001305442.1">
    <molecule id="Q2VPK5-3"/>
    <property type="nucleotide sequence ID" value="NM_001318513.2"/>
</dbReference>
<dbReference type="BioGRID" id="131513">
    <property type="interactions" value="98"/>
</dbReference>
<dbReference type="DIP" id="DIP-48633N"/>
<dbReference type="FunCoup" id="Q2VPK5">
    <property type="interactions" value="1667"/>
</dbReference>
<dbReference type="IntAct" id="Q2VPK5">
    <property type="interactions" value="49"/>
</dbReference>
<dbReference type="STRING" id="9606.ENSP00000456908"/>
<dbReference type="GlyGen" id="Q2VPK5">
    <property type="glycosylation" value="2 sites, 1 O-linked glycan (1 site)"/>
</dbReference>
<dbReference type="iPTMnet" id="Q2VPK5"/>
<dbReference type="PhosphoSitePlus" id="Q2VPK5"/>
<dbReference type="SwissPalm" id="Q2VPK5"/>
<dbReference type="BioMuta" id="CTU2"/>
<dbReference type="DMDM" id="121941955"/>
<dbReference type="jPOST" id="Q2VPK5"/>
<dbReference type="MassIVE" id="Q2VPK5"/>
<dbReference type="PaxDb" id="9606-ENSP00000388320"/>
<dbReference type="PeptideAtlas" id="Q2VPK5"/>
<dbReference type="ProteomicsDB" id="61520">
    <molecule id="Q2VPK5-1"/>
</dbReference>
<dbReference type="ProteomicsDB" id="61521">
    <molecule id="Q2VPK5-3"/>
</dbReference>
<dbReference type="ProteomicsDB" id="61522">
    <molecule id="Q2VPK5-5"/>
</dbReference>
<dbReference type="Pumba" id="Q2VPK5"/>
<dbReference type="Antibodypedia" id="49625">
    <property type="antibodies" value="37 antibodies from 13 providers"/>
</dbReference>
<dbReference type="DNASU" id="348180"/>
<dbReference type="Ensembl" id="ENST00000312060.9">
    <molecule id="Q2VPK5-5"/>
    <property type="protein sequence ID" value="ENSP00000308617.5"/>
    <property type="gene ID" value="ENSG00000174177.13"/>
</dbReference>
<dbReference type="Ensembl" id="ENST00000453996.7">
    <molecule id="Q2VPK5-1"/>
    <property type="protein sequence ID" value="ENSP00000388320.2"/>
    <property type="gene ID" value="ENSG00000174177.13"/>
</dbReference>
<dbReference type="GeneID" id="348180"/>
<dbReference type="KEGG" id="hsa:348180"/>
<dbReference type="MANE-Select" id="ENST00000453996.7">
    <property type="protein sequence ID" value="ENSP00000388320.2"/>
    <property type="RefSeq nucleotide sequence ID" value="NM_001012759.3"/>
    <property type="RefSeq protein sequence ID" value="NP_001012777.1"/>
</dbReference>
<dbReference type="UCSC" id="uc002flm.4">
    <molecule id="Q2VPK5-1"/>
    <property type="organism name" value="human"/>
</dbReference>
<dbReference type="AGR" id="HGNC:28005"/>
<dbReference type="CTD" id="348180"/>
<dbReference type="DisGeNET" id="348180"/>
<dbReference type="GeneCards" id="CTU2"/>
<dbReference type="HGNC" id="HGNC:28005">
    <property type="gene designation" value="CTU2"/>
</dbReference>
<dbReference type="HPA" id="ENSG00000174177">
    <property type="expression patterns" value="Low tissue specificity"/>
</dbReference>
<dbReference type="MalaCards" id="CTU2"/>
<dbReference type="MIM" id="617057">
    <property type="type" value="gene"/>
</dbReference>
<dbReference type="MIM" id="618142">
    <property type="type" value="phenotype"/>
</dbReference>
<dbReference type="neXtProt" id="NX_Q2VPK5"/>
<dbReference type="OpenTargets" id="ENSG00000174177"/>
<dbReference type="PharmGKB" id="PA165449882"/>
<dbReference type="VEuPathDB" id="HostDB:ENSG00000174177"/>
<dbReference type="eggNOG" id="KOG2594">
    <property type="taxonomic scope" value="Eukaryota"/>
</dbReference>
<dbReference type="GeneTree" id="ENSGT00390000008797"/>
<dbReference type="HOGENOM" id="CLU_024534_2_0_1"/>
<dbReference type="InParanoid" id="Q2VPK5"/>
<dbReference type="OMA" id="KQRKQMM"/>
<dbReference type="OrthoDB" id="25129at2759"/>
<dbReference type="PAN-GO" id="Q2VPK5">
    <property type="GO annotations" value="3 GO annotations based on evolutionary models"/>
</dbReference>
<dbReference type="PhylomeDB" id="Q2VPK5"/>
<dbReference type="TreeFam" id="TF313203"/>
<dbReference type="BioCyc" id="MetaCyc:MONOMER-20243"/>
<dbReference type="PathwayCommons" id="Q2VPK5"/>
<dbReference type="Reactome" id="R-HSA-6782315">
    <property type="pathway name" value="tRNA modification in the nucleus and cytosol"/>
</dbReference>
<dbReference type="SignaLink" id="Q2VPK5"/>
<dbReference type="UniPathway" id="UPA00988"/>
<dbReference type="BioGRID-ORCS" id="348180">
    <property type="hits" value="560 hits in 1138 CRISPR screens"/>
</dbReference>
<dbReference type="ChiTaRS" id="CTU2">
    <property type="organism name" value="human"/>
</dbReference>
<dbReference type="GeneWiki" id="C16orf84"/>
<dbReference type="GenomeRNAi" id="348180"/>
<dbReference type="Pharos" id="Q2VPK5">
    <property type="development level" value="Tdark"/>
</dbReference>
<dbReference type="PRO" id="PR:Q2VPK5"/>
<dbReference type="Proteomes" id="UP000005640">
    <property type="component" value="Chromosome 16"/>
</dbReference>
<dbReference type="RNAct" id="Q2VPK5">
    <property type="molecule type" value="protein"/>
</dbReference>
<dbReference type="Bgee" id="ENSG00000174177">
    <property type="expression patterns" value="Expressed in oocyte and 127 other cell types or tissues"/>
</dbReference>
<dbReference type="ExpressionAtlas" id="Q2VPK5">
    <property type="expression patterns" value="baseline and differential"/>
</dbReference>
<dbReference type="GO" id="GO:0005829">
    <property type="term" value="C:cytosol"/>
    <property type="evidence" value="ECO:0000318"/>
    <property type="project" value="GO_Central"/>
</dbReference>
<dbReference type="GO" id="GO:0032991">
    <property type="term" value="C:protein-containing complex"/>
    <property type="evidence" value="ECO:0000314"/>
    <property type="project" value="UniProtKB"/>
</dbReference>
<dbReference type="GO" id="GO:0016779">
    <property type="term" value="F:nucleotidyltransferase activity"/>
    <property type="evidence" value="ECO:0007669"/>
    <property type="project" value="UniProtKB-UniRule"/>
</dbReference>
<dbReference type="GO" id="GO:0016783">
    <property type="term" value="F:sulfurtransferase activity"/>
    <property type="evidence" value="ECO:0000318"/>
    <property type="project" value="GO_Central"/>
</dbReference>
<dbReference type="GO" id="GO:0000049">
    <property type="term" value="F:tRNA binding"/>
    <property type="evidence" value="ECO:0007669"/>
    <property type="project" value="InterPro"/>
</dbReference>
<dbReference type="GO" id="GO:0032447">
    <property type="term" value="P:protein urmylation"/>
    <property type="evidence" value="ECO:0007669"/>
    <property type="project" value="UniProtKB-UniRule"/>
</dbReference>
<dbReference type="GO" id="GO:0034227">
    <property type="term" value="P:tRNA thio-modification"/>
    <property type="evidence" value="ECO:0000303"/>
    <property type="project" value="UniProtKB"/>
</dbReference>
<dbReference type="GO" id="GO:0002143">
    <property type="term" value="P:tRNA wobble position uridine thiolation"/>
    <property type="evidence" value="ECO:0000318"/>
    <property type="project" value="GO_Central"/>
</dbReference>
<dbReference type="GO" id="GO:0002098">
    <property type="term" value="P:tRNA wobble uridine modification"/>
    <property type="evidence" value="ECO:0000303"/>
    <property type="project" value="UniProtKB"/>
</dbReference>
<dbReference type="Gene3D" id="3.40.50.620">
    <property type="entry name" value="HUPs"/>
    <property type="match status" value="1"/>
</dbReference>
<dbReference type="HAMAP" id="MF_03054">
    <property type="entry name" value="CTU2"/>
    <property type="match status" value="1"/>
</dbReference>
<dbReference type="InterPro" id="IPR019407">
    <property type="entry name" value="CTU2"/>
</dbReference>
<dbReference type="InterPro" id="IPR014729">
    <property type="entry name" value="Rossmann-like_a/b/a_fold"/>
</dbReference>
<dbReference type="PANTHER" id="PTHR20882">
    <property type="entry name" value="CYTOPLASMIC TRNA 2-THIOLATION PROTEIN 2"/>
    <property type="match status" value="1"/>
</dbReference>
<dbReference type="PANTHER" id="PTHR20882:SF14">
    <property type="entry name" value="CYTOPLASMIC TRNA 2-THIOLATION PROTEIN 2"/>
    <property type="match status" value="1"/>
</dbReference>
<dbReference type="Pfam" id="PF10288">
    <property type="entry name" value="CTU2"/>
    <property type="match status" value="1"/>
</dbReference>
<dbReference type="SUPFAM" id="SSF52402">
    <property type="entry name" value="Adenine nucleotide alpha hydrolases-like"/>
    <property type="match status" value="1"/>
</dbReference>
<name>CTU2_HUMAN</name>
<feature type="initiator methionine" description="Removed" evidence="10">
    <location>
        <position position="1"/>
    </location>
</feature>
<feature type="chain" id="PRO_0000289175" description="Cytoplasmic tRNA 2-thiolation protein 2">
    <location>
        <begin position="2"/>
        <end position="515"/>
    </location>
</feature>
<feature type="region of interest" description="Disordered" evidence="2">
    <location>
        <begin position="1"/>
        <end position="24"/>
    </location>
</feature>
<feature type="region of interest" description="Disordered" evidence="2">
    <location>
        <begin position="188"/>
        <end position="217"/>
    </location>
</feature>
<feature type="modified residue" description="N-acetylcysteine" evidence="10">
    <location>
        <position position="2"/>
    </location>
</feature>
<feature type="modified residue" description="Phosphoserine" evidence="12">
    <location>
        <position position="415"/>
    </location>
</feature>
<feature type="modified residue" description="Phosphoserine" evidence="9 11 13">
    <location>
        <position position="419"/>
    </location>
</feature>
<feature type="modified residue" description="Phosphoserine" evidence="13">
    <location>
        <position position="435"/>
    </location>
</feature>
<feature type="modified residue" description="Phosphoserine" evidence="8 9">
    <location>
        <position position="508"/>
    </location>
</feature>
<feature type="splice variant" id="VSP_025950" description="In isoform 2." evidence="6">
    <location>
        <begin position="1"/>
        <end position="87"/>
    </location>
</feature>
<feature type="splice variant" id="VSP_039378" description="In isoform 3." evidence="6">
    <original>PSLDPLPPYILAEAQLRTQRAWGLQEIRDCLIEDSDDEAGQS</original>
    <variation>GLGLAGDPGLSD</variation>
    <location>
        <begin position="474"/>
        <end position="515"/>
    </location>
</feature>
<feature type="sequence variant" id="VAR_062244" description="In dbSNP:rs2290895.">
    <original>H</original>
    <variation>Y</variation>
    <location>
        <position position="186"/>
    </location>
</feature>
<feature type="sequence variant" id="VAR_032595" description="In dbSNP:rs11549837." evidence="3">
    <original>M</original>
    <variation>V</variation>
    <location>
        <position position="253"/>
    </location>
</feature>
<feature type="sequence variant" id="VAR_032596" description="In dbSNP:rs4782321.">
    <original>V</original>
    <variation>I</variation>
    <location>
        <position position="332"/>
    </location>
</feature>
<feature type="sequence variant" id="VAR_032597" description="In dbSNP:rs8059048." evidence="3">
    <original>Q</original>
    <variation>R</variation>
    <location>
        <position position="416"/>
    </location>
</feature>
<feature type="sequence conflict" description="In Ref. 1; AAH80540." evidence="7" ref="1">
    <original>R</original>
    <variation>W</variation>
    <location>
        <position position="297"/>
    </location>
</feature>
<comment type="function">
    <text evidence="1 4">Plays a central role in 2-thiolation of mcm(5)S(2)U at tRNA wobble positions of tRNA(Lys), tRNA(Glu) and tRNA(Gln). May act by forming a heterodimer with CTU1/ATPBD3 that ligates sulfur from thiocarboxylated URM1 onto the uridine of tRNAs at wobble position.</text>
</comment>
<comment type="pathway">
    <text evidence="1">tRNA modification; 5-methoxycarbonylmethyl-2-thiouridine-tRNA biosynthesis.</text>
</comment>
<comment type="subunit">
    <text evidence="1 4">Component of a complex at least composed of URM1, CTU2/NCS2 and CTU1/ATPBD3.</text>
</comment>
<comment type="subcellular location">
    <subcellularLocation>
        <location>Cytoplasm</location>
    </subcellularLocation>
</comment>
<comment type="alternative products">
    <event type="alternative splicing"/>
    <isoform>
        <id>Q2VPK5-1</id>
        <name>1</name>
        <sequence type="displayed"/>
    </isoform>
    <isoform>
        <id>Q2VPK5-3</id>
        <name>2</name>
        <sequence type="described" ref="VSP_025950"/>
    </isoform>
    <isoform>
        <id>Q2VPK5-5</id>
        <name>3</name>
        <sequence type="described" ref="VSP_039378"/>
    </isoform>
</comment>
<comment type="disease" evidence="5">
    <disease id="DI-05346">
        <name>Microcephaly, facial dysmorphism, renal agenesis, and ambiguous genitalia syndrome</name>
        <acronym>MFRG</acronym>
        <description>An autosomal dominant syndrome characterized by primary microcephaly, ambiguous male genitalia, dysmorphic facies, polydactyly, and unilateral renal agenesis. Variable brain, cardiac, and skeletal anomalies are present, including corpus callosum agenesis or dysgenesis, lissencephaly, atrial and ventricular septal defects, patent ductus arteriosus, hypoplastic right ventricle, and joint contractures.</description>
        <dbReference type="MIM" id="618142"/>
    </disease>
    <text evidence="5">The disease may be caused by variants affecting the gene represented in this entry. A homozygous synonymous variant at codon 247 has been identified in 3 consanguineous families. This variant impairs normal splicing, causing a frameshift resulting in a premature termination codon.</text>
</comment>
<comment type="miscellaneous">
    <molecule>Isoform 3</molecule>
    <text evidence="7">Incomplete sequence.</text>
</comment>
<comment type="similarity">
    <text evidence="1">Belongs to the CTU2/NCS2 family.</text>
</comment>
<evidence type="ECO:0000255" key="1">
    <source>
        <dbReference type="HAMAP-Rule" id="MF_03054"/>
    </source>
</evidence>
<evidence type="ECO:0000256" key="2">
    <source>
        <dbReference type="SAM" id="MobiDB-lite"/>
    </source>
</evidence>
<evidence type="ECO:0000269" key="3">
    <source>
    </source>
</evidence>
<evidence type="ECO:0000269" key="4">
    <source>
    </source>
</evidence>
<evidence type="ECO:0000269" key="5">
    <source>
    </source>
</evidence>
<evidence type="ECO:0000303" key="6">
    <source>
    </source>
</evidence>
<evidence type="ECO:0000305" key="7"/>
<evidence type="ECO:0007744" key="8">
    <source>
    </source>
</evidence>
<evidence type="ECO:0007744" key="9">
    <source>
    </source>
</evidence>
<evidence type="ECO:0007744" key="10">
    <source>
    </source>
</evidence>
<evidence type="ECO:0007744" key="11">
    <source>
    </source>
</evidence>
<evidence type="ECO:0007744" key="12">
    <source>
    </source>
</evidence>
<evidence type="ECO:0007744" key="13">
    <source>
    </source>
</evidence>
<gene>
    <name evidence="1" type="primary">CTU2</name>
    <name type="synonym">C16orf84</name>
    <name evidence="1" type="synonym">NCS2</name>
</gene>